<feature type="chain" id="PRO_0000092205" description="Cytochrome c biogenesis ATP-binding export protein CcmA">
    <location>
        <begin position="1"/>
        <end position="210"/>
    </location>
</feature>
<feature type="domain" description="ABC transporter" evidence="1">
    <location>
        <begin position="3"/>
        <end position="209"/>
    </location>
</feature>
<feature type="binding site" evidence="1">
    <location>
        <begin position="35"/>
        <end position="42"/>
    </location>
    <ligand>
        <name>ATP</name>
        <dbReference type="ChEBI" id="CHEBI:30616"/>
    </ligand>
</feature>
<sequence>MDLTVTNLACARGGVTVLERVSFRLSRGAALILRGPNGIGKTTLLRTVAGLQPAVAGEISMPPEAVAYAAHADGLKATLTVAENLAFWAAIYGTDRAARAIERMNLAALADRQAQNLSAGQKRRLGLARLLVTGRPLWVLDEPTVSLDAASVALFGDVVRTHLAEGGAALMATHIDLGLAEAEVLDLAPYRAETPAGTEPADDPFAGVTA</sequence>
<name>CCMA_CERS4</name>
<gene>
    <name evidence="1" type="primary">ccmA</name>
    <name type="ordered locus">RHOS4_03800</name>
    <name type="ORF">RSP_1801</name>
</gene>
<keyword id="KW-0067">ATP-binding</keyword>
<keyword id="KW-0997">Cell inner membrane</keyword>
<keyword id="KW-1003">Cell membrane</keyword>
<keyword id="KW-0201">Cytochrome c-type biogenesis</keyword>
<keyword id="KW-0472">Membrane</keyword>
<keyword id="KW-0547">Nucleotide-binding</keyword>
<keyword id="KW-1185">Reference proteome</keyword>
<keyword id="KW-1278">Translocase</keyword>
<keyword id="KW-0813">Transport</keyword>
<dbReference type="EC" id="7.6.2.5" evidence="1"/>
<dbReference type="EMBL" id="U83136">
    <property type="protein sequence ID" value="AAB61906.1"/>
    <property type="molecule type" value="Genomic_DNA"/>
</dbReference>
<dbReference type="EMBL" id="CP000143">
    <property type="protein sequence ID" value="ABA77948.1"/>
    <property type="molecule type" value="Genomic_DNA"/>
</dbReference>
<dbReference type="RefSeq" id="WP_011336993.1">
    <property type="nucleotide sequence ID" value="NC_007493.2"/>
</dbReference>
<dbReference type="RefSeq" id="YP_351849.1">
    <property type="nucleotide sequence ID" value="NC_007493.2"/>
</dbReference>
<dbReference type="SMR" id="O33570"/>
<dbReference type="STRING" id="272943.RSP_1801"/>
<dbReference type="EnsemblBacteria" id="ABA77948">
    <property type="protein sequence ID" value="ABA77948"/>
    <property type="gene ID" value="RSP_1801"/>
</dbReference>
<dbReference type="GeneID" id="3719046"/>
<dbReference type="KEGG" id="rsp:RSP_1801"/>
<dbReference type="PATRIC" id="fig|272943.9.peg.682"/>
<dbReference type="eggNOG" id="COG4133">
    <property type="taxonomic scope" value="Bacteria"/>
</dbReference>
<dbReference type="OrthoDB" id="9800654at2"/>
<dbReference type="PhylomeDB" id="O33570"/>
<dbReference type="Proteomes" id="UP000002703">
    <property type="component" value="Chromosome 1"/>
</dbReference>
<dbReference type="GO" id="GO:0005886">
    <property type="term" value="C:plasma membrane"/>
    <property type="evidence" value="ECO:0007669"/>
    <property type="project" value="UniProtKB-SubCell"/>
</dbReference>
<dbReference type="GO" id="GO:0015439">
    <property type="term" value="F:ABC-type heme transporter activity"/>
    <property type="evidence" value="ECO:0007669"/>
    <property type="project" value="UniProtKB-EC"/>
</dbReference>
<dbReference type="GO" id="GO:0005524">
    <property type="term" value="F:ATP binding"/>
    <property type="evidence" value="ECO:0007669"/>
    <property type="project" value="UniProtKB-KW"/>
</dbReference>
<dbReference type="GO" id="GO:0016887">
    <property type="term" value="F:ATP hydrolysis activity"/>
    <property type="evidence" value="ECO:0007669"/>
    <property type="project" value="InterPro"/>
</dbReference>
<dbReference type="GO" id="GO:0017004">
    <property type="term" value="P:cytochrome complex assembly"/>
    <property type="evidence" value="ECO:0007669"/>
    <property type="project" value="UniProtKB-KW"/>
</dbReference>
<dbReference type="Gene3D" id="3.40.50.300">
    <property type="entry name" value="P-loop containing nucleotide triphosphate hydrolases"/>
    <property type="match status" value="1"/>
</dbReference>
<dbReference type="InterPro" id="IPR003593">
    <property type="entry name" value="AAA+_ATPase"/>
</dbReference>
<dbReference type="InterPro" id="IPR003439">
    <property type="entry name" value="ABC_transporter-like_ATP-bd"/>
</dbReference>
<dbReference type="InterPro" id="IPR017871">
    <property type="entry name" value="ABC_transporter-like_CS"/>
</dbReference>
<dbReference type="InterPro" id="IPR005895">
    <property type="entry name" value="ABC_transptr_haem_export_CcmA"/>
</dbReference>
<dbReference type="InterPro" id="IPR027417">
    <property type="entry name" value="P-loop_NTPase"/>
</dbReference>
<dbReference type="NCBIfam" id="TIGR01189">
    <property type="entry name" value="ccmA"/>
    <property type="match status" value="1"/>
</dbReference>
<dbReference type="PANTHER" id="PTHR43499">
    <property type="entry name" value="ABC TRANSPORTER I FAMILY MEMBER 1"/>
    <property type="match status" value="1"/>
</dbReference>
<dbReference type="PANTHER" id="PTHR43499:SF1">
    <property type="entry name" value="ABC TRANSPORTER I FAMILY MEMBER 1"/>
    <property type="match status" value="1"/>
</dbReference>
<dbReference type="Pfam" id="PF00005">
    <property type="entry name" value="ABC_tran"/>
    <property type="match status" value="1"/>
</dbReference>
<dbReference type="SMART" id="SM00382">
    <property type="entry name" value="AAA"/>
    <property type="match status" value="1"/>
</dbReference>
<dbReference type="SUPFAM" id="SSF52540">
    <property type="entry name" value="P-loop containing nucleoside triphosphate hydrolases"/>
    <property type="match status" value="1"/>
</dbReference>
<dbReference type="PROSITE" id="PS00211">
    <property type="entry name" value="ABC_TRANSPORTER_1"/>
    <property type="match status" value="1"/>
</dbReference>
<dbReference type="PROSITE" id="PS50893">
    <property type="entry name" value="ABC_TRANSPORTER_2"/>
    <property type="match status" value="1"/>
</dbReference>
<dbReference type="PROSITE" id="PS51243">
    <property type="entry name" value="CCMA"/>
    <property type="match status" value="1"/>
</dbReference>
<evidence type="ECO:0000255" key="1">
    <source>
        <dbReference type="HAMAP-Rule" id="MF_01707"/>
    </source>
</evidence>
<organism>
    <name type="scientific">Cereibacter sphaeroides (strain ATCC 17023 / DSM 158 / JCM 6121 / CCUG 31486 / LMG 2827 / NBRC 12203 / NCIMB 8253 / ATH 2.4.1.)</name>
    <name type="common">Rhodobacter sphaeroides</name>
    <dbReference type="NCBI Taxonomy" id="272943"/>
    <lineage>
        <taxon>Bacteria</taxon>
        <taxon>Pseudomonadati</taxon>
        <taxon>Pseudomonadota</taxon>
        <taxon>Alphaproteobacteria</taxon>
        <taxon>Rhodobacterales</taxon>
        <taxon>Paracoccaceae</taxon>
        <taxon>Cereibacter</taxon>
    </lineage>
</organism>
<accession>O33570</accession>
<accession>Q3J5I6</accession>
<protein>
    <recommendedName>
        <fullName evidence="1">Cytochrome c biogenesis ATP-binding export protein CcmA</fullName>
        <ecNumber evidence="1">7.6.2.5</ecNumber>
    </recommendedName>
    <alternativeName>
        <fullName evidence="1">Heme exporter protein A</fullName>
    </alternativeName>
</protein>
<proteinExistence type="inferred from homology"/>
<reference key="1">
    <citation type="submission" date="1996-12" db="EMBL/GenBank/DDBJ databases">
        <title>Identification and characterization of putative cytochrome c maturation genes (ccmABCDG) from Rhodobacter sphaeroides.</title>
        <authorList>
            <person name="Patterson C.S."/>
            <person name="Donohue T.J."/>
        </authorList>
    </citation>
    <scope>NUCLEOTIDE SEQUENCE [GENOMIC DNA]</scope>
</reference>
<reference key="2">
    <citation type="submission" date="2005-09" db="EMBL/GenBank/DDBJ databases">
        <title>Complete sequence of chromosome 1 of Rhodobacter sphaeroides 2.4.1.</title>
        <authorList>
            <person name="Copeland A."/>
            <person name="Lucas S."/>
            <person name="Lapidus A."/>
            <person name="Barry K."/>
            <person name="Detter J.C."/>
            <person name="Glavina T."/>
            <person name="Hammon N."/>
            <person name="Israni S."/>
            <person name="Pitluck S."/>
            <person name="Richardson P."/>
            <person name="Mackenzie C."/>
            <person name="Choudhary M."/>
            <person name="Larimer F."/>
            <person name="Hauser L.J."/>
            <person name="Land M."/>
            <person name="Donohue T.J."/>
            <person name="Kaplan S."/>
        </authorList>
    </citation>
    <scope>NUCLEOTIDE SEQUENCE [LARGE SCALE GENOMIC DNA]</scope>
    <source>
        <strain>ATCC 17023 / DSM 158 / JCM 6121 / CCUG 31486 / LMG 2827 / NBRC 12203 / NCIMB 8253 / ATH 2.4.1.</strain>
    </source>
</reference>
<comment type="function">
    <text evidence="1">Part of the ABC transporter complex CcmAB involved in the biogenesis of c-type cytochromes; once thought to export heme, this seems not to be the case, but its exact role is uncertain. Responsible for energy coupling to the transport system.</text>
</comment>
<comment type="catalytic activity">
    <reaction evidence="1">
        <text>heme b(in) + ATP + H2O = heme b(out) + ADP + phosphate + H(+)</text>
        <dbReference type="Rhea" id="RHEA:19261"/>
        <dbReference type="ChEBI" id="CHEBI:15377"/>
        <dbReference type="ChEBI" id="CHEBI:15378"/>
        <dbReference type="ChEBI" id="CHEBI:30616"/>
        <dbReference type="ChEBI" id="CHEBI:43474"/>
        <dbReference type="ChEBI" id="CHEBI:60344"/>
        <dbReference type="ChEBI" id="CHEBI:456216"/>
        <dbReference type="EC" id="7.6.2.5"/>
    </reaction>
</comment>
<comment type="subunit">
    <text evidence="1">The complex is composed of two ATP-binding proteins (CcmA) and two transmembrane proteins (CcmB).</text>
</comment>
<comment type="subcellular location">
    <subcellularLocation>
        <location evidence="1">Cell inner membrane</location>
        <topology evidence="1">Peripheral membrane protein</topology>
    </subcellularLocation>
</comment>
<comment type="similarity">
    <text evidence="1">Belongs to the ABC transporter superfamily. CcmA exporter (TC 3.A.1.107) family.</text>
</comment>